<gene>
    <name type="primary">ACL1.A3</name>
</gene>
<gene>
    <name type="primary">ACL1.A4</name>
</gene>
<sequence>MATTFSASVSTLATSLATPTRISFQKPALVSRTNLSFNLRRSIPTRLSVSCAAKPETIEKVSKIVKKQLSLKDDQKVVAETKFADLGADSLDTVEIVMGLEEEFDIEMAEEKAQKIATVEEAAELIEELVLLKK</sequence>
<organism>
    <name type="scientific">Brassica napus</name>
    <name type="common">Rape</name>
    <dbReference type="NCBI Taxonomy" id="3708"/>
    <lineage>
        <taxon>Eukaryota</taxon>
        <taxon>Viridiplantae</taxon>
        <taxon>Streptophyta</taxon>
        <taxon>Embryophyta</taxon>
        <taxon>Tracheophyta</taxon>
        <taxon>Spermatophyta</taxon>
        <taxon>Magnoliopsida</taxon>
        <taxon>eudicotyledons</taxon>
        <taxon>Gunneridae</taxon>
        <taxon>Pentapetalae</taxon>
        <taxon>rosids</taxon>
        <taxon>malvids</taxon>
        <taxon>Brassicales</taxon>
        <taxon>Brassicaceae</taxon>
        <taxon>Brassiceae</taxon>
        <taxon>Brassica</taxon>
    </lineage>
</organism>
<reference key="1">
    <citation type="journal article" date="1988" name="Eur. J. Biochem.">
        <title>Plastid-localised seed acyl-carrier protein of Brassica napus is encoded by a distinct, nuclear multigene family.</title>
        <authorList>
            <person name="Safford R."/>
            <person name="Windust J.H.C."/>
            <person name="Lucas C."/>
            <person name="de Silva J."/>
            <person name="James C.M."/>
            <person name="Hellyer A."/>
            <person name="Smith C.G."/>
            <person name="Slabas A.R."/>
            <person name="Hughes S.G."/>
        </authorList>
    </citation>
    <scope>NUCLEOTIDE SEQUENCE [MRNA]</scope>
    <source>
        <strain>cv. Jet neuf</strain>
        <tissue>Seed</tissue>
    </source>
</reference>
<reference key="2">
    <citation type="journal article" date="1994" name="Plant Mol. Biol. Rep.">
        <title>Nomenclature for genes encoding acyl carrier protein (ACP).</title>
        <authorList>
            <person name="von Wettstein-Knowles P."/>
            <person name="Knauf V."/>
            <person name="Ohlrogge J.B."/>
            <person name="Lamppa G."/>
            <person name="Safford R."/>
            <person name="Souciet G."/>
        </authorList>
    </citation>
    <scope>NOMENCLATURE</scope>
</reference>
<name>ACP3_BRANA</name>
<keyword id="KW-0150">Chloroplast</keyword>
<keyword id="KW-0275">Fatty acid biosynthesis</keyword>
<keyword id="KW-0276">Fatty acid metabolism</keyword>
<keyword id="KW-0444">Lipid biosynthesis</keyword>
<keyword id="KW-0443">Lipid metabolism</keyword>
<keyword id="KW-0596">Phosphopantetheine</keyword>
<keyword id="KW-0597">Phosphoprotein</keyword>
<keyword id="KW-0934">Plastid</keyword>
<keyword id="KW-0809">Transit peptide</keyword>
<evidence type="ECO:0000250" key="1"/>
<evidence type="ECO:0000255" key="2">
    <source>
        <dbReference type="PROSITE-ProRule" id="PRU00258"/>
    </source>
</evidence>
<evidence type="ECO:0000305" key="3"/>
<proteinExistence type="evidence at transcript level"/>
<comment type="function">
    <text>Carrier of the growing fatty acid chain in fatty acid biosynthesis.</text>
</comment>
<comment type="pathway">
    <text>Lipid metabolism; fatty acid biosynthesis.</text>
</comment>
<comment type="subcellular location">
    <subcellularLocation>
        <location>Plastid</location>
        <location>Chloroplast</location>
    </subcellularLocation>
</comment>
<comment type="tissue specificity">
    <text>Seed.</text>
</comment>
<comment type="PTM">
    <text evidence="1">4'-phosphopantetheine is transferred from CoA to a specific serine of apo-ACP by acpS. This modification is essential for activity because fatty acids are bound in thioester linkage to the sulfhydryl of the prosthetic group (By similarity).</text>
</comment>
<comment type="miscellaneous">
    <text>In rape seeds ACP is coded by two multigene families. There are probably a total of 35 genes.</text>
</comment>
<comment type="miscellaneous">
    <text>The sequence shown is that of ACL1.A4.</text>
</comment>
<comment type="similarity">
    <text evidence="3">Belongs to the acyl carrier protein (ACP) family.</text>
</comment>
<protein>
    <recommendedName>
        <fullName>Acyl carrier protein, chloroplastic</fullName>
        <shortName>ACP</shortName>
    </recommendedName>
    <alternativeName>
        <fullName>Clones 34C02 and 10C04</fullName>
    </alternativeName>
</protein>
<feature type="transit peptide" description="Chloroplast">
    <location>
        <begin position="1"/>
        <end position="51"/>
    </location>
</feature>
<feature type="chain" id="PRO_0000000574" description="Acyl carrier protein, chloroplastic">
    <location>
        <begin position="52"/>
        <end position="134"/>
    </location>
</feature>
<feature type="domain" description="Carrier" evidence="2">
    <location>
        <begin position="55"/>
        <end position="130"/>
    </location>
</feature>
<feature type="modified residue" description="O-(pantetheine 4'-phosphoryl)serine" evidence="2">
    <location>
        <position position="90"/>
    </location>
</feature>
<feature type="sequence variant" description="In ACL1.A3.">
    <original>K</original>
    <variation>KK</variation>
    <location>
        <position position="134"/>
    </location>
</feature>
<dbReference type="EMBL" id="X13125">
    <property type="protein sequence ID" value="CAA31516.1"/>
    <property type="molecule type" value="mRNA"/>
</dbReference>
<dbReference type="EMBL" id="X13126">
    <property type="protein sequence ID" value="CAA31517.1"/>
    <property type="molecule type" value="mRNA"/>
</dbReference>
<dbReference type="PIR" id="S01256">
    <property type="entry name" value="S01256"/>
</dbReference>
<dbReference type="RefSeq" id="XP_013684429.1">
    <property type="nucleotide sequence ID" value="XM_013828975.1"/>
</dbReference>
<dbReference type="RefSeq" id="XP_013684436.1">
    <property type="nucleotide sequence ID" value="XM_013828982.1"/>
</dbReference>
<dbReference type="SMR" id="P32887"/>
<dbReference type="KEGG" id="bna:106388827"/>
<dbReference type="OrthoDB" id="448946at2759"/>
<dbReference type="UniPathway" id="UPA00094"/>
<dbReference type="GO" id="GO:0009507">
    <property type="term" value="C:chloroplast"/>
    <property type="evidence" value="ECO:0007669"/>
    <property type="project" value="UniProtKB-SubCell"/>
</dbReference>
<dbReference type="GO" id="GO:0000036">
    <property type="term" value="F:acyl carrier activity"/>
    <property type="evidence" value="ECO:0007669"/>
    <property type="project" value="InterPro"/>
</dbReference>
<dbReference type="GO" id="GO:0031177">
    <property type="term" value="F:phosphopantetheine binding"/>
    <property type="evidence" value="ECO:0007669"/>
    <property type="project" value="InterPro"/>
</dbReference>
<dbReference type="FunFam" id="1.10.1200.10:FF:000017">
    <property type="entry name" value="Acyl carrier protein"/>
    <property type="match status" value="1"/>
</dbReference>
<dbReference type="Gene3D" id="1.10.1200.10">
    <property type="entry name" value="ACP-like"/>
    <property type="match status" value="1"/>
</dbReference>
<dbReference type="HAMAP" id="MF_01217">
    <property type="entry name" value="Acyl_carrier"/>
    <property type="match status" value="1"/>
</dbReference>
<dbReference type="InterPro" id="IPR003231">
    <property type="entry name" value="ACP"/>
</dbReference>
<dbReference type="InterPro" id="IPR036736">
    <property type="entry name" value="ACP-like_sf"/>
</dbReference>
<dbReference type="InterPro" id="IPR044813">
    <property type="entry name" value="ACP_chloroplastic"/>
</dbReference>
<dbReference type="InterPro" id="IPR020806">
    <property type="entry name" value="PKS_PP-bd"/>
</dbReference>
<dbReference type="InterPro" id="IPR009081">
    <property type="entry name" value="PP-bd_ACP"/>
</dbReference>
<dbReference type="InterPro" id="IPR006162">
    <property type="entry name" value="Ppantetheine_attach_site"/>
</dbReference>
<dbReference type="NCBIfam" id="TIGR00517">
    <property type="entry name" value="acyl_carrier"/>
    <property type="match status" value="1"/>
</dbReference>
<dbReference type="NCBIfam" id="NF002148">
    <property type="entry name" value="PRK00982.1-2"/>
    <property type="match status" value="1"/>
</dbReference>
<dbReference type="PANTHER" id="PTHR46153">
    <property type="entry name" value="ACYL CARRIER PROTEIN"/>
    <property type="match status" value="1"/>
</dbReference>
<dbReference type="PANTHER" id="PTHR46153:SF9">
    <property type="entry name" value="ACYL CARRIER PROTEIN 1, CHLOROPLASTIC"/>
    <property type="match status" value="1"/>
</dbReference>
<dbReference type="Pfam" id="PF00550">
    <property type="entry name" value="PP-binding"/>
    <property type="match status" value="1"/>
</dbReference>
<dbReference type="SMART" id="SM00823">
    <property type="entry name" value="PKS_PP"/>
    <property type="match status" value="1"/>
</dbReference>
<dbReference type="SUPFAM" id="SSF47336">
    <property type="entry name" value="ACP-like"/>
    <property type="match status" value="1"/>
</dbReference>
<dbReference type="PROSITE" id="PS50075">
    <property type="entry name" value="CARRIER"/>
    <property type="match status" value="1"/>
</dbReference>
<dbReference type="PROSITE" id="PS00012">
    <property type="entry name" value="PHOSPHOPANTETHEINE"/>
    <property type="match status" value="1"/>
</dbReference>
<accession>P32887</accession>
<accession>P08972</accession>